<proteinExistence type="inferred from homology"/>
<accession>Q0PA12</accession>
<accession>Q46089</accession>
<accession>Q9PP45</accession>
<reference key="1">
    <citation type="journal article" date="2000" name="Nature">
        <title>The genome sequence of the food-borne pathogen Campylobacter jejuni reveals hypervariable sequences.</title>
        <authorList>
            <person name="Parkhill J."/>
            <person name="Wren B.W."/>
            <person name="Mungall K.L."/>
            <person name="Ketley J.M."/>
            <person name="Churcher C.M."/>
            <person name="Basham D."/>
            <person name="Chillingworth T."/>
            <person name="Davies R.M."/>
            <person name="Feltwell T."/>
            <person name="Holroyd S."/>
            <person name="Jagels K."/>
            <person name="Karlyshev A.V."/>
            <person name="Moule S."/>
            <person name="Pallen M.J."/>
            <person name="Penn C.W."/>
            <person name="Quail M.A."/>
            <person name="Rajandream M.A."/>
            <person name="Rutherford K.M."/>
            <person name="van Vliet A.H.M."/>
            <person name="Whitehead S."/>
            <person name="Barrell B.G."/>
        </authorList>
    </citation>
    <scope>NUCLEOTIDE SEQUENCE [LARGE SCALE GENOMIC DNA]</scope>
    <source>
        <strain>ATCC 700819 / NCTC 11168</strain>
    </source>
</reference>
<name>FTSK_CAMJE</name>
<feature type="chain" id="PRO_0000098245" description="DNA translocase FtsK">
    <location>
        <begin position="1"/>
        <end position="946"/>
    </location>
</feature>
<feature type="transmembrane region" description="Helical" evidence="2">
    <location>
        <begin position="15"/>
        <end position="35"/>
    </location>
</feature>
<feature type="transmembrane region" description="Helical" evidence="2">
    <location>
        <begin position="50"/>
        <end position="70"/>
    </location>
</feature>
<feature type="transmembrane region" description="Helical" evidence="2">
    <location>
        <begin position="86"/>
        <end position="106"/>
    </location>
</feature>
<feature type="topological domain" description="Cytoplasmic" evidence="2">
    <location>
        <begin position="107"/>
        <end position="946"/>
    </location>
</feature>
<feature type="domain" description="FtsK" evidence="3">
    <location>
        <begin position="620"/>
        <end position="810"/>
    </location>
</feature>
<feature type="binding site" evidence="3">
    <location>
        <begin position="640"/>
        <end position="645"/>
    </location>
    <ligand>
        <name>ATP</name>
        <dbReference type="ChEBI" id="CHEBI:30616"/>
    </ligand>
</feature>
<protein>
    <recommendedName>
        <fullName>DNA translocase FtsK</fullName>
    </recommendedName>
</protein>
<keyword id="KW-0067">ATP-binding</keyword>
<keyword id="KW-0131">Cell cycle</keyword>
<keyword id="KW-0132">Cell division</keyword>
<keyword id="KW-0997">Cell inner membrane</keyword>
<keyword id="KW-1003">Cell membrane</keyword>
<keyword id="KW-0159">Chromosome partition</keyword>
<keyword id="KW-0238">DNA-binding</keyword>
<keyword id="KW-0472">Membrane</keyword>
<keyword id="KW-0547">Nucleotide-binding</keyword>
<keyword id="KW-1185">Reference proteome</keyword>
<keyword id="KW-0812">Transmembrane</keyword>
<keyword id="KW-1133">Transmembrane helix</keyword>
<comment type="function">
    <text evidence="1">Essential cell division protein that coordinates cell division and chromosome segregation. The N-terminus is involved in assembly of the cell-division machinery. The C-terminus functions as a DNA motor that moves dsDNA in an ATP-dependent manner towards the dif recombination site, which is located within the replication terminus region. Translocation stops specifically at Xer-dif sites, where FtsK interacts with the Xer recombinase, allowing activation of chromosome unlinking by recombination. FtsK orienting polar sequences (KOPS) guide the direction of DNA translocation. FtsK can remove proteins from DNA as it translocates, but translocation stops specifically at XerCD-dif site, thereby preventing removal of XerC and XerD from dif (By similarity).</text>
</comment>
<comment type="subunit">
    <text evidence="1">Homohexamer. Forms a ring that surrounds DNA (By similarity).</text>
</comment>
<comment type="subcellular location">
    <subcellularLocation>
        <location evidence="1">Cell inner membrane</location>
        <topology evidence="1">Multi-pass membrane protein</topology>
    </subcellularLocation>
    <text evidence="1">Located at the septum.</text>
</comment>
<comment type="domain">
    <text evidence="1">Consists of an N-terminal domain, which is sufficient for the localization to the septal ring and is required for cell division, followed by a linker domain, and a C-terminal domain, which forms the translocation motor involved in chromosome segregation. The C-terminal domain can be further subdivided into alpha, beta and gamma subdomains. The alpha and beta subdomains multimerise to produce a hexameric ring, contain the nucleotide binding motif and form the DNA pump. The gamma subdomain is a regulatory subdomain that controls translocation of DNA by recognition of KOPS motifs and interacts with XerD recombinase (By similarity).</text>
</comment>
<comment type="similarity">
    <text evidence="4">Belongs to the FtsK/SpoIIIE/SftA family.</text>
</comment>
<sequence>MLAPGMGEWVYKANLFLFGEFAYYYPFFLFILNYVYYKRNYKLANFTRRELFGIGFAFFSSLLLFAVFYPNSGYILELAYAIFSTILGHTGSGIFALLLLLFSLVLLFPKFAKEILKIELDFTYLLKVEQAFKSLLMRVFGGENEKEDVGKSEPIVPKLNILQDSIYGNLQINKKGETNNLEQIIKDSNINASKNSITTAKENFEKLKNQILDETIEIDKQSLKESRSFVHEHSQQVRNFAQKASKMSISLDEDFNFISEEEVDMIPERFLKPKKLEDIKQIDTNKNLDEPSYKRKNIEIPVSNQEVKPKIFTKELELRENLIKKEKLEQEYKAYQNEILENKVKQEIKKLEEYDAINSSDIIEGNKYSFNSPKTIKTETEESDKINENKNLDKADNIFEFAPIVEELNHPYIEPTPIKNINEIVIEEKNTLDFIQNTETKIDNEKTNDQEIKLQKAVLAKEIAINQALLREIEQGEIEKPKDFTLPPLDFLANPKEHKQEINESEIDKKIYNLLEKLRRFKIGGDVISTYVGPVVTTFEFRPSADVKVSRILNLQDDLTMALMAKSIRIQAPIPGKDVVGIEVPNDEIQTIYLREILQSEVFKNAKSPLTIALGKDIVGNAFVTDLKKLPHLLIAGTTGSGKSVGINSMLLSLLYRNSPKTLRLMMIDPKMLEFSIYNDIPHLLTPVITDPKKAVNALSNMVAEMERRYRLMADAKTKNIENYNEKMKELGGEKLPFIVVIIDELADLMMTAGKDVEFYIGRLAQMARASGIHLIVATQRPSVDVVTGLIKANLPSRISYKVGQKIDSKVILDAMGAESLLGRGDCLFTPPGTSSIVRLHAPFASEFEIEKIVDFLKDQQSVEYDESFLKDQQSVGVTTNESFDGEADELYEEAKRVILEDGKTSISYLQRRLKIGYNRSANIIEQLTQNGILSEPDAKGQREIL</sequence>
<organism>
    <name type="scientific">Campylobacter jejuni subsp. jejuni serotype O:2 (strain ATCC 700819 / NCTC 11168)</name>
    <dbReference type="NCBI Taxonomy" id="192222"/>
    <lineage>
        <taxon>Bacteria</taxon>
        <taxon>Pseudomonadati</taxon>
        <taxon>Campylobacterota</taxon>
        <taxon>Epsilonproteobacteria</taxon>
        <taxon>Campylobacterales</taxon>
        <taxon>Campylobacteraceae</taxon>
        <taxon>Campylobacter</taxon>
    </lineage>
</organism>
<gene>
    <name type="primary">ftsK</name>
    <name type="synonym">ftsQ</name>
    <name type="ordered locus">Cj0886c</name>
</gene>
<evidence type="ECO:0000250" key="1"/>
<evidence type="ECO:0000255" key="2"/>
<evidence type="ECO:0000255" key="3">
    <source>
        <dbReference type="PROSITE-ProRule" id="PRU00289"/>
    </source>
</evidence>
<evidence type="ECO:0000305" key="4"/>
<dbReference type="EMBL" id="AL111168">
    <property type="protein sequence ID" value="CAL35007.1"/>
    <property type="molecule type" value="Genomic_DNA"/>
</dbReference>
<dbReference type="PIR" id="F81361">
    <property type="entry name" value="F81361"/>
</dbReference>
<dbReference type="RefSeq" id="WP_010891893.1">
    <property type="nucleotide sequence ID" value="NZ_SZUC01000001.1"/>
</dbReference>
<dbReference type="RefSeq" id="YP_002344285.1">
    <property type="nucleotide sequence ID" value="NC_002163.1"/>
</dbReference>
<dbReference type="SMR" id="Q0PA12"/>
<dbReference type="STRING" id="192222.Cj0886c"/>
<dbReference type="PaxDb" id="192222-Cj0886c"/>
<dbReference type="EnsemblBacteria" id="CAL35007">
    <property type="protein sequence ID" value="CAL35007"/>
    <property type="gene ID" value="Cj0886c"/>
</dbReference>
<dbReference type="GeneID" id="905152"/>
<dbReference type="KEGG" id="cje:Cj0886c"/>
<dbReference type="PATRIC" id="fig|192222.6.peg.870"/>
<dbReference type="eggNOG" id="COG1196">
    <property type="taxonomic scope" value="Bacteria"/>
</dbReference>
<dbReference type="eggNOG" id="COG1674">
    <property type="taxonomic scope" value="Bacteria"/>
</dbReference>
<dbReference type="HOGENOM" id="CLU_001981_8_1_7"/>
<dbReference type="OrthoDB" id="9807790at2"/>
<dbReference type="Proteomes" id="UP000000799">
    <property type="component" value="Chromosome"/>
</dbReference>
<dbReference type="GO" id="GO:0005886">
    <property type="term" value="C:plasma membrane"/>
    <property type="evidence" value="ECO:0007669"/>
    <property type="project" value="UniProtKB-SubCell"/>
</dbReference>
<dbReference type="GO" id="GO:0005524">
    <property type="term" value="F:ATP binding"/>
    <property type="evidence" value="ECO:0007669"/>
    <property type="project" value="UniProtKB-KW"/>
</dbReference>
<dbReference type="GO" id="GO:0003677">
    <property type="term" value="F:DNA binding"/>
    <property type="evidence" value="ECO:0007669"/>
    <property type="project" value="UniProtKB-KW"/>
</dbReference>
<dbReference type="GO" id="GO:0051301">
    <property type="term" value="P:cell division"/>
    <property type="evidence" value="ECO:0007669"/>
    <property type="project" value="UniProtKB-KW"/>
</dbReference>
<dbReference type="GO" id="GO:0007059">
    <property type="term" value="P:chromosome segregation"/>
    <property type="evidence" value="ECO:0007669"/>
    <property type="project" value="UniProtKB-KW"/>
</dbReference>
<dbReference type="CDD" id="cd01127">
    <property type="entry name" value="TrwB_TraG_TraD_VirD4"/>
    <property type="match status" value="1"/>
</dbReference>
<dbReference type="Gene3D" id="3.30.980.40">
    <property type="match status" value="1"/>
</dbReference>
<dbReference type="Gene3D" id="3.40.50.300">
    <property type="entry name" value="P-loop containing nucleotide triphosphate hydrolases"/>
    <property type="match status" value="1"/>
</dbReference>
<dbReference type="Gene3D" id="1.10.10.10">
    <property type="entry name" value="Winged helix-like DNA-binding domain superfamily/Winged helix DNA-binding domain"/>
    <property type="match status" value="1"/>
</dbReference>
<dbReference type="InterPro" id="IPR050206">
    <property type="entry name" value="FtsK/SpoIIIE/SftA"/>
</dbReference>
<dbReference type="InterPro" id="IPR041027">
    <property type="entry name" value="FtsK_alpha"/>
</dbReference>
<dbReference type="InterPro" id="IPR002543">
    <property type="entry name" value="FtsK_dom"/>
</dbReference>
<dbReference type="InterPro" id="IPR018541">
    <property type="entry name" value="Ftsk_gamma"/>
</dbReference>
<dbReference type="InterPro" id="IPR027417">
    <property type="entry name" value="P-loop_NTPase"/>
</dbReference>
<dbReference type="InterPro" id="IPR036388">
    <property type="entry name" value="WH-like_DNA-bd_sf"/>
</dbReference>
<dbReference type="InterPro" id="IPR036390">
    <property type="entry name" value="WH_DNA-bd_sf"/>
</dbReference>
<dbReference type="PANTHER" id="PTHR22683:SF41">
    <property type="entry name" value="DNA TRANSLOCASE FTSK"/>
    <property type="match status" value="1"/>
</dbReference>
<dbReference type="PANTHER" id="PTHR22683">
    <property type="entry name" value="SPORULATION PROTEIN RELATED"/>
    <property type="match status" value="1"/>
</dbReference>
<dbReference type="Pfam" id="PF17854">
    <property type="entry name" value="FtsK_alpha"/>
    <property type="match status" value="1"/>
</dbReference>
<dbReference type="Pfam" id="PF09397">
    <property type="entry name" value="FtsK_gamma"/>
    <property type="match status" value="1"/>
</dbReference>
<dbReference type="Pfam" id="PF01580">
    <property type="entry name" value="FtsK_SpoIIIE"/>
    <property type="match status" value="1"/>
</dbReference>
<dbReference type="SMART" id="SM00843">
    <property type="entry name" value="Ftsk_gamma"/>
    <property type="match status" value="1"/>
</dbReference>
<dbReference type="SUPFAM" id="SSF52540">
    <property type="entry name" value="P-loop containing nucleoside triphosphate hydrolases"/>
    <property type="match status" value="1"/>
</dbReference>
<dbReference type="SUPFAM" id="SSF46785">
    <property type="entry name" value="Winged helix' DNA-binding domain"/>
    <property type="match status" value="1"/>
</dbReference>
<dbReference type="PROSITE" id="PS50901">
    <property type="entry name" value="FTSK"/>
    <property type="match status" value="1"/>
</dbReference>